<name>FBX9_BOVIN</name>
<comment type="function">
    <text evidence="1 2">Substrate recognition component of a SCF (SKP1-CUL1-F-box protein) E3 ubiquitin-protein ligase complex which mediates the ubiquitination and subsequent proteasomal degradation of target proteins and plays a role in several biological processes such as cell cycle, cell proliferation, or maintenance of chromosome stability. Ubiquitinates mTORC1-bound TTI1 and TELO2 when they are phosphorylated by CK2 following growth factor deprivation, leading to their degradation. In contrast, does not mediate ubiquitination of TTI1 and TELO2 when they are part of the mTORC2 complex. As a consequence, mTORC1 is inactivated to restrain cell growth and protein translation, while mTORC2 is the activated due to the relief of feedback inhibition by mTORC1. Plays a role in maintaining epithelial cell survival by regulating the turn-over of chromatin modulator PRMT4 through ubiquitination and degradation by the proteasomal pathway (By similarity). Also regulates PPARgamma stability by facilitating PPARgamma/PPARG ubiquitination and thereby plays a role in adipocyte differentiation (By similarity).</text>
</comment>
<comment type="pathway">
    <text>Protein modification; protein ubiquitination.</text>
</comment>
<comment type="subunit">
    <text evidence="2">Part of the SCF (SKP1-CUL1-F-box) E3 ubiquitin-protein ligase complex SCF(FBXO9) composed of CUL1, SKP1, RBX1 and FBXO9. Interacts with TTI1 and TELO2; when TTI1 and TELO2 are phosphorylated by CK2.</text>
</comment>
<comment type="subcellular location">
    <subcellularLocation>
        <location evidence="2">Cytoplasm</location>
    </subcellularLocation>
</comment>
<proteinExistence type="evidence at transcript level"/>
<protein>
    <recommendedName>
        <fullName>F-box only protein 9</fullName>
    </recommendedName>
</protein>
<dbReference type="EMBL" id="DAAA02055275">
    <property type="status" value="NOT_ANNOTATED_CDS"/>
    <property type="molecule type" value="Genomic_DNA"/>
</dbReference>
<dbReference type="EMBL" id="BC103124">
    <property type="protein sequence ID" value="AAI03125.1"/>
    <property type="molecule type" value="mRNA"/>
</dbReference>
<dbReference type="RefSeq" id="NP_001029584.1">
    <property type="nucleotide sequence ID" value="NM_001034412.2"/>
</dbReference>
<dbReference type="FunCoup" id="Q3ZBT2">
    <property type="interactions" value="1912"/>
</dbReference>
<dbReference type="STRING" id="9913.ENSBTAP00000020074"/>
<dbReference type="PaxDb" id="9913-ENSBTAP00000020074"/>
<dbReference type="GeneID" id="511798"/>
<dbReference type="KEGG" id="bta:511798"/>
<dbReference type="CTD" id="26268"/>
<dbReference type="VEuPathDB" id="HostDB:ENSBTAG00000015083"/>
<dbReference type="eggNOG" id="KOG2997">
    <property type="taxonomic scope" value="Eukaryota"/>
</dbReference>
<dbReference type="HOGENOM" id="CLU_041758_0_0_1"/>
<dbReference type="InParanoid" id="Q3ZBT2"/>
<dbReference type="OMA" id="RWNRLDF"/>
<dbReference type="OrthoDB" id="2117972at2759"/>
<dbReference type="TreeFam" id="TF324797"/>
<dbReference type="Reactome" id="R-BTA-8951664">
    <property type="pathway name" value="Neddylation"/>
</dbReference>
<dbReference type="Reactome" id="R-BTA-983168">
    <property type="pathway name" value="Antigen processing: Ubiquitination &amp; Proteasome degradation"/>
</dbReference>
<dbReference type="UniPathway" id="UPA00143"/>
<dbReference type="Proteomes" id="UP000009136">
    <property type="component" value="Chromosome 23"/>
</dbReference>
<dbReference type="Bgee" id="ENSBTAG00000015083">
    <property type="expression patterns" value="Expressed in retina and 107 other cell types or tissues"/>
</dbReference>
<dbReference type="GO" id="GO:0005737">
    <property type="term" value="C:cytoplasm"/>
    <property type="evidence" value="ECO:0000250"/>
    <property type="project" value="UniProtKB"/>
</dbReference>
<dbReference type="GO" id="GO:0019005">
    <property type="term" value="C:SCF ubiquitin ligase complex"/>
    <property type="evidence" value="ECO:0000250"/>
    <property type="project" value="UniProtKB"/>
</dbReference>
<dbReference type="GO" id="GO:0016567">
    <property type="term" value="P:protein ubiquitination"/>
    <property type="evidence" value="ECO:0000250"/>
    <property type="project" value="UniProtKB"/>
</dbReference>
<dbReference type="GO" id="GO:0032006">
    <property type="term" value="P:regulation of TOR signaling"/>
    <property type="evidence" value="ECO:0000250"/>
    <property type="project" value="UniProtKB"/>
</dbReference>
<dbReference type="GO" id="GO:0031146">
    <property type="term" value="P:SCF-dependent proteasomal ubiquitin-dependent protein catabolic process"/>
    <property type="evidence" value="ECO:0000250"/>
    <property type="project" value="UniProtKB"/>
</dbReference>
<dbReference type="CDD" id="cd22089">
    <property type="entry name" value="F-box_FBXO9"/>
    <property type="match status" value="1"/>
</dbReference>
<dbReference type="FunFam" id="1.20.1280.50:FF:000012">
    <property type="entry name" value="F-box only protein 9"/>
    <property type="match status" value="1"/>
</dbReference>
<dbReference type="Gene3D" id="1.20.1280.50">
    <property type="match status" value="1"/>
</dbReference>
<dbReference type="InterPro" id="IPR036047">
    <property type="entry name" value="F-box-like_dom_sf"/>
</dbReference>
<dbReference type="InterPro" id="IPR001810">
    <property type="entry name" value="F-box_dom"/>
</dbReference>
<dbReference type="InterPro" id="IPR045464">
    <property type="entry name" value="Hrt3/FBXO9_C"/>
</dbReference>
<dbReference type="InterPro" id="IPR036181">
    <property type="entry name" value="MIT_dom_sf"/>
</dbReference>
<dbReference type="PANTHER" id="PTHR12874">
    <property type="entry name" value="F-BOX ONLY PROTEIN 48-RELATED"/>
    <property type="match status" value="1"/>
</dbReference>
<dbReference type="PANTHER" id="PTHR12874:SF29">
    <property type="entry name" value="F-BOX ONLY PROTEIN 9"/>
    <property type="match status" value="1"/>
</dbReference>
<dbReference type="Pfam" id="PF12937">
    <property type="entry name" value="F-box-like"/>
    <property type="match status" value="1"/>
</dbReference>
<dbReference type="Pfam" id="PF19270">
    <property type="entry name" value="FBO_C"/>
    <property type="match status" value="1"/>
</dbReference>
<dbReference type="SUPFAM" id="SSF81383">
    <property type="entry name" value="F-box domain"/>
    <property type="match status" value="1"/>
</dbReference>
<dbReference type="SUPFAM" id="SSF116846">
    <property type="entry name" value="MIT domain"/>
    <property type="match status" value="1"/>
</dbReference>
<dbReference type="PROSITE" id="PS50181">
    <property type="entry name" value="FBOX"/>
    <property type="match status" value="1"/>
</dbReference>
<organism>
    <name type="scientific">Bos taurus</name>
    <name type="common">Bovine</name>
    <dbReference type="NCBI Taxonomy" id="9913"/>
    <lineage>
        <taxon>Eukaryota</taxon>
        <taxon>Metazoa</taxon>
        <taxon>Chordata</taxon>
        <taxon>Craniata</taxon>
        <taxon>Vertebrata</taxon>
        <taxon>Euteleostomi</taxon>
        <taxon>Mammalia</taxon>
        <taxon>Eutheria</taxon>
        <taxon>Laurasiatheria</taxon>
        <taxon>Artiodactyla</taxon>
        <taxon>Ruminantia</taxon>
        <taxon>Pecora</taxon>
        <taxon>Bovidae</taxon>
        <taxon>Bovinae</taxon>
        <taxon>Bos</taxon>
    </lineage>
</organism>
<feature type="chain" id="PRO_0000259956" description="F-box only protein 9">
    <location>
        <begin position="1"/>
        <end position="437"/>
    </location>
</feature>
<feature type="repeat" description="TPR">
    <location>
        <begin position="84"/>
        <end position="117"/>
    </location>
</feature>
<feature type="domain" description="F-box" evidence="3">
    <location>
        <begin position="175"/>
        <end position="226"/>
    </location>
</feature>
<feature type="region of interest" description="Disordered" evidence="4">
    <location>
        <begin position="1"/>
        <end position="29"/>
    </location>
</feature>
<feature type="compositionally biased region" description="Acidic residues" evidence="4">
    <location>
        <begin position="16"/>
        <end position="26"/>
    </location>
</feature>
<feature type="modified residue" description="Phosphoserine" evidence="2">
    <location>
        <position position="126"/>
    </location>
</feature>
<feature type="sequence conflict" description="In Ref. 2; AAI03125." evidence="5" ref="2">
    <original>V</original>
    <variation>I</variation>
    <location>
        <position position="189"/>
    </location>
</feature>
<accession>Q3ZBT2</accession>
<accession>F1MVQ0</accession>
<keyword id="KW-0963">Cytoplasm</keyword>
<keyword id="KW-0597">Phosphoprotein</keyword>
<keyword id="KW-1185">Reference proteome</keyword>
<keyword id="KW-0802">TPR repeat</keyword>
<keyword id="KW-0833">Ubl conjugation pathway</keyword>
<gene>
    <name type="primary">FBXO9</name>
</gene>
<evidence type="ECO:0000250" key="1">
    <source>
        <dbReference type="UniProtKB" id="Q8BK06"/>
    </source>
</evidence>
<evidence type="ECO:0000250" key="2">
    <source>
        <dbReference type="UniProtKB" id="Q9UK97"/>
    </source>
</evidence>
<evidence type="ECO:0000255" key="3">
    <source>
        <dbReference type="PROSITE-ProRule" id="PRU00080"/>
    </source>
</evidence>
<evidence type="ECO:0000256" key="4">
    <source>
        <dbReference type="SAM" id="MobiDB-lite"/>
    </source>
</evidence>
<evidence type="ECO:0000305" key="5"/>
<reference key="1">
    <citation type="journal article" date="2009" name="Genome Biol.">
        <title>A whole-genome assembly of the domestic cow, Bos taurus.</title>
        <authorList>
            <person name="Zimin A.V."/>
            <person name="Delcher A.L."/>
            <person name="Florea L."/>
            <person name="Kelley D.R."/>
            <person name="Schatz M.C."/>
            <person name="Puiu D."/>
            <person name="Hanrahan F."/>
            <person name="Pertea G."/>
            <person name="Van Tassell C.P."/>
            <person name="Sonstegard T.S."/>
            <person name="Marcais G."/>
            <person name="Roberts M."/>
            <person name="Subramanian P."/>
            <person name="Yorke J.A."/>
            <person name="Salzberg S.L."/>
        </authorList>
    </citation>
    <scope>NUCLEOTIDE SEQUENCE [LARGE SCALE GENOMIC DNA]</scope>
    <source>
        <strain>Hereford</strain>
    </source>
</reference>
<reference key="2">
    <citation type="submission" date="2005-08" db="EMBL/GenBank/DDBJ databases">
        <authorList>
            <consortium name="NIH - Mammalian Gene Collection (MGC) project"/>
        </authorList>
    </citation>
    <scope>NUCLEOTIDE SEQUENCE [LARGE SCALE MRNA]</scope>
    <source>
        <strain>Hereford</strain>
        <tissue>Thymus</tissue>
    </source>
</reference>
<sequence>MAEAEEDCHSEAVREGDDDDENESPAETDLQAQLQRFRAQWMFELAPGGGSGNLESRPCRAARGSLLRAADTRGKQELAKEEKARELFLKAVEEEQNGALYEAIKFYRRAMQLVPDIEFKITYTRSPDGDGVGNSYIEDTDDDSKMADLLSYFQQQLTFQESVLKLCQPELESSQTHISALPMEVLMYVFRWVVSSDLDLRSLEQLSQVCRGFYICARDPEIWRLACLKVWGRSCIKLVPYTSWREMFLERPRVRFDGVYISKTTYIRQGEQSLDGFYRAWHQVEYYRYVRFFPDGHVMMLTTPEEPQSIVPRLRTRNTRTDAILLGHYRLSQDTDNQTKVFAVITKKKEEKALDHKYRYFRRAPVQEADQNFHVGLQLCSSGHQSFNKLIWIHHSCHITYKSTGETAVTAFEIDKMYTPLLFARVRSYTAFSERPL</sequence>